<reference key="1">
    <citation type="journal article" date="1984" name="FEBS Lett.">
        <title>The amino acid sequences of the alpha 1 and alpha 2 subunits of the isolectins from seeds of Lathyrus ochrus (L) DC.</title>
        <authorList>
            <person name="Richardson M."/>
            <person name="Rouge P."/>
            <person name="Sousa-Cavada B."/>
            <person name="Yarwood A."/>
        </authorList>
    </citation>
    <scope>PROTEIN SEQUENCE</scope>
</reference>
<reference key="2">
    <citation type="journal article" date="1990" name="J. Mol. Biol.">
        <title>X-ray crystal structure determination and refinement at 1.9-A resolution of isolectin I from the seeds of Lathyrus ochrus.</title>
        <authorList>
            <person name="Bourne Y."/>
            <person name="Abergel C."/>
            <person name="Cambillau C."/>
            <person name="Frey M."/>
            <person name="Rouge P."/>
            <person name="Fontecilla-Camps J.-C."/>
        </authorList>
    </citation>
    <scope>X-RAY CRYSTALLOGRAPHY (1.9 ANGSTROMS)</scope>
</reference>
<reference key="3">
    <citation type="journal article" date="1990" name="Proteins">
        <title>Three-dimensional structures of complexes of Lathyrus ochrus isolectin I with glucose and mannose: fine specificity of the monosaccharide-binding site.</title>
        <authorList>
            <person name="Bourne Y."/>
            <person name="Roussel A."/>
            <person name="Frey M."/>
            <person name="Rouge P."/>
            <person name="Fontecilla-Camps J.-C."/>
            <person name="Cambillau C."/>
        </authorList>
    </citation>
    <scope>X-RAY CRYSTALLOGRAPHY (1.9 ANGSTROMS)</scope>
</reference>
<protein>
    <recommendedName>
        <fullName>Mannose/glucose-specific lectin alpha 1 chain</fullName>
        <shortName>Lol I</shortName>
    </recommendedName>
</protein>
<organism>
    <name type="scientific">Lathyrus ochrus</name>
    <name type="common">Cyprus-vetch</name>
    <name type="synonym">Pisum ochrus</name>
    <dbReference type="NCBI Taxonomy" id="3858"/>
    <lineage>
        <taxon>Eukaryota</taxon>
        <taxon>Viridiplantae</taxon>
        <taxon>Streptophyta</taxon>
        <taxon>Embryophyta</taxon>
        <taxon>Tracheophyta</taxon>
        <taxon>Spermatophyta</taxon>
        <taxon>Magnoliopsida</taxon>
        <taxon>eudicotyledons</taxon>
        <taxon>Gunneridae</taxon>
        <taxon>Pentapetalae</taxon>
        <taxon>rosids</taxon>
        <taxon>fabids</taxon>
        <taxon>Fabales</taxon>
        <taxon>Fabaceae</taxon>
        <taxon>Papilionoideae</taxon>
        <taxon>50 kb inversion clade</taxon>
        <taxon>NPAAA clade</taxon>
        <taxon>Hologalegina</taxon>
        <taxon>IRL clade</taxon>
        <taxon>Fabeae</taxon>
        <taxon>Lathyrus</taxon>
    </lineage>
</organism>
<keyword id="KW-0002">3D-structure</keyword>
<keyword id="KW-0903">Direct protein sequencing</keyword>
<keyword id="KW-0430">Lectin</keyword>
<keyword id="KW-0465">Mannose-binding</keyword>
<sequence>ETSYTLNEVVPLKEFVPEWVRIGFSATTGAEFAAHEVLSWFFHSELAGTSSSN</sequence>
<comment type="subunit">
    <text>Tetramer of two alpha and two beta chains.</text>
</comment>
<comment type="similarity">
    <text evidence="1">Belongs to the leguminous lectin family.</text>
</comment>
<accession>P12306</accession>
<proteinExistence type="evidence at protein level"/>
<evidence type="ECO:0000305" key="1"/>
<evidence type="ECO:0007829" key="2">
    <source>
        <dbReference type="PDB" id="1LOB"/>
    </source>
</evidence>
<evidence type="ECO:0007829" key="3">
    <source>
        <dbReference type="PDB" id="1LOE"/>
    </source>
</evidence>
<evidence type="ECO:0007829" key="4">
    <source>
        <dbReference type="PDB" id="1LOF"/>
    </source>
</evidence>
<name>LEC1_LATOC</name>
<feature type="chain" id="PRO_0000105102" description="Mannose/glucose-specific lectin alpha 1 chain">
    <location>
        <begin position="1"/>
        <end position="53"/>
    </location>
</feature>
<feature type="strand" evidence="3">
    <location>
        <begin position="3"/>
        <end position="9"/>
    </location>
</feature>
<feature type="helix" evidence="3">
    <location>
        <begin position="12"/>
        <end position="14"/>
    </location>
</feature>
<feature type="strand" evidence="3">
    <location>
        <begin position="18"/>
        <end position="27"/>
    </location>
</feature>
<feature type="strand" evidence="2">
    <location>
        <begin position="29"/>
        <end position="31"/>
    </location>
</feature>
<feature type="strand" evidence="3">
    <location>
        <begin position="34"/>
        <end position="46"/>
    </location>
</feature>
<feature type="strand" evidence="4">
    <location>
        <begin position="48"/>
        <end position="50"/>
    </location>
</feature>
<dbReference type="PIR" id="A25989">
    <property type="entry name" value="A25989"/>
</dbReference>
<dbReference type="PDB" id="1LOA">
    <property type="method" value="X-ray"/>
    <property type="resolution" value="2.20 A"/>
    <property type="chains" value="B/D/F/H=1-52"/>
</dbReference>
<dbReference type="PDB" id="1LOB">
    <property type="method" value="X-ray"/>
    <property type="resolution" value="2.00 A"/>
    <property type="chains" value="B/D/F/H=1-52"/>
</dbReference>
<dbReference type="PDB" id="1LOC">
    <property type="method" value="X-ray"/>
    <property type="resolution" value="2.05 A"/>
    <property type="chains" value="B/D/F/H=1-52"/>
</dbReference>
<dbReference type="PDB" id="1LOD">
    <property type="method" value="X-ray"/>
    <property type="resolution" value="2.05 A"/>
    <property type="chains" value="B/D/F/H=1-52"/>
</dbReference>
<dbReference type="PDB" id="1LOE">
    <property type="method" value="X-ray"/>
    <property type="resolution" value="1.90 A"/>
    <property type="chains" value="B/D=1-52"/>
</dbReference>
<dbReference type="PDB" id="1LOF">
    <property type="method" value="X-ray"/>
    <property type="resolution" value="2.30 A"/>
    <property type="chains" value="B=1-52, D=1-51"/>
</dbReference>
<dbReference type="PDB" id="1LOG">
    <property type="method" value="X-ray"/>
    <property type="resolution" value="2.10 A"/>
    <property type="chains" value="B/D=1-52"/>
</dbReference>
<dbReference type="PDBsum" id="1LOA"/>
<dbReference type="PDBsum" id="1LOB"/>
<dbReference type="PDBsum" id="1LOC"/>
<dbReference type="PDBsum" id="1LOD"/>
<dbReference type="PDBsum" id="1LOE"/>
<dbReference type="PDBsum" id="1LOF"/>
<dbReference type="PDBsum" id="1LOG"/>
<dbReference type="SMR" id="P12306"/>
<dbReference type="DIP" id="DIP-6192N"/>
<dbReference type="UniLectin" id="P12306"/>
<dbReference type="EvolutionaryTrace" id="P12306"/>
<dbReference type="GO" id="GO:0005537">
    <property type="term" value="F:D-mannose binding"/>
    <property type="evidence" value="ECO:0007669"/>
    <property type="project" value="UniProtKB-KW"/>
</dbReference>
<dbReference type="Gene3D" id="2.60.120.200">
    <property type="match status" value="1"/>
</dbReference>
<dbReference type="InterPro" id="IPR013320">
    <property type="entry name" value="ConA-like_dom_sf"/>
</dbReference>
<dbReference type="InterPro" id="IPR000985">
    <property type="entry name" value="Lectin_LegA_CS"/>
</dbReference>
<dbReference type="InterPro" id="IPR001220">
    <property type="entry name" value="Legume_lectin_dom"/>
</dbReference>
<dbReference type="Pfam" id="PF00139">
    <property type="entry name" value="Lectin_legB"/>
    <property type="match status" value="1"/>
</dbReference>
<dbReference type="SUPFAM" id="SSF49899">
    <property type="entry name" value="Concanavalin A-like lectins/glucanases"/>
    <property type="match status" value="1"/>
</dbReference>
<dbReference type="PROSITE" id="PS00308">
    <property type="entry name" value="LECTIN_LEGUME_ALPHA"/>
    <property type="match status" value="1"/>
</dbReference>